<keyword id="KW-0963">Cytoplasm</keyword>
<keyword id="KW-0413">Isomerase</keyword>
<keyword id="KW-0627">Porphyrin biosynthesis</keyword>
<keyword id="KW-0663">Pyridoxal phosphate</keyword>
<keyword id="KW-1185">Reference proteome</keyword>
<sequence>MSKSENLYSAARELIPGGVNSPVRAFTGVGGTPLFIEKADGAWLYDVDGKAYIDYVGSWGPMVLGHNHPAIRNAVIEAAERGLSFGAPTEMEVKMAELVTSLVPTMDMVRMVNSGTEATMSAIRLARGFTGRDKIIKFEGCYHGHADCLLVKAGSGALTLGQPNSPGVPADFAKHTLTCVYNDLASVRAAFEQYPQEIACIIVEPVAGNMNCVLPLPEFLPGLRALCDEFGALLIIDEVMTGFRVALAGAQDYYGVVPDLTCLGKIIGGGMPVGAFGGRRDVMDALAPTGPVYQAGTLSGNPIAMAAGFACLNEVAQPGIHETLNKLTTRLAEGLREAAQEAGIPLVVNHVGGMFGIFFTDAGSVTCYQDVMACDVERFKRFFHLMLDEGVYLAPSAFEAGFMSVAHSMDDINNTIDAARRVFAKL</sequence>
<name>GSA_SALAR</name>
<evidence type="ECO:0000255" key="1">
    <source>
        <dbReference type="HAMAP-Rule" id="MF_00375"/>
    </source>
</evidence>
<comment type="catalytic activity">
    <reaction evidence="1">
        <text>(S)-4-amino-5-oxopentanoate = 5-aminolevulinate</text>
        <dbReference type="Rhea" id="RHEA:14265"/>
        <dbReference type="ChEBI" id="CHEBI:57501"/>
        <dbReference type="ChEBI" id="CHEBI:356416"/>
        <dbReference type="EC" id="5.4.3.8"/>
    </reaction>
</comment>
<comment type="cofactor">
    <cofactor evidence="1">
        <name>pyridoxal 5'-phosphate</name>
        <dbReference type="ChEBI" id="CHEBI:597326"/>
    </cofactor>
</comment>
<comment type="pathway">
    <text evidence="1">Porphyrin-containing compound metabolism; protoporphyrin-IX biosynthesis; 5-aminolevulinate from L-glutamyl-tRNA(Glu): step 2/2.</text>
</comment>
<comment type="subunit">
    <text evidence="1">Homodimer.</text>
</comment>
<comment type="subcellular location">
    <subcellularLocation>
        <location evidence="1">Cytoplasm</location>
    </subcellularLocation>
</comment>
<comment type="similarity">
    <text evidence="1">Belongs to the class-III pyridoxal-phosphate-dependent aminotransferase family. HemL subfamily.</text>
</comment>
<feature type="chain" id="PRO_1000079930" description="Glutamate-1-semialdehyde 2,1-aminomutase">
    <location>
        <begin position="1"/>
        <end position="426"/>
    </location>
</feature>
<feature type="modified residue" description="N6-(pyridoxal phosphate)lysine" evidence="1">
    <location>
        <position position="265"/>
    </location>
</feature>
<protein>
    <recommendedName>
        <fullName evidence="1">Glutamate-1-semialdehyde 2,1-aminomutase</fullName>
        <shortName evidence="1">GSA</shortName>
        <ecNumber evidence="1">5.4.3.8</ecNumber>
    </recommendedName>
    <alternativeName>
        <fullName evidence="1">Glutamate-1-semialdehyde aminotransferase</fullName>
        <shortName evidence="1">GSA-AT</shortName>
    </alternativeName>
</protein>
<accession>A9MPK7</accession>
<dbReference type="EC" id="5.4.3.8" evidence="1"/>
<dbReference type="EMBL" id="CP000880">
    <property type="protein sequence ID" value="ABX22650.1"/>
    <property type="molecule type" value="Genomic_DNA"/>
</dbReference>
<dbReference type="SMR" id="A9MPK7"/>
<dbReference type="STRING" id="41514.SARI_02802"/>
<dbReference type="KEGG" id="ses:SARI_02802"/>
<dbReference type="HOGENOM" id="CLU_016922_1_5_6"/>
<dbReference type="UniPathway" id="UPA00251">
    <property type="reaction ID" value="UER00317"/>
</dbReference>
<dbReference type="Proteomes" id="UP000002084">
    <property type="component" value="Chromosome"/>
</dbReference>
<dbReference type="GO" id="GO:0005737">
    <property type="term" value="C:cytoplasm"/>
    <property type="evidence" value="ECO:0007669"/>
    <property type="project" value="UniProtKB-SubCell"/>
</dbReference>
<dbReference type="GO" id="GO:0042286">
    <property type="term" value="F:glutamate-1-semialdehyde 2,1-aminomutase activity"/>
    <property type="evidence" value="ECO:0007669"/>
    <property type="project" value="UniProtKB-UniRule"/>
</dbReference>
<dbReference type="GO" id="GO:0030170">
    <property type="term" value="F:pyridoxal phosphate binding"/>
    <property type="evidence" value="ECO:0007669"/>
    <property type="project" value="InterPro"/>
</dbReference>
<dbReference type="GO" id="GO:0008483">
    <property type="term" value="F:transaminase activity"/>
    <property type="evidence" value="ECO:0007669"/>
    <property type="project" value="InterPro"/>
</dbReference>
<dbReference type="GO" id="GO:0006782">
    <property type="term" value="P:protoporphyrinogen IX biosynthetic process"/>
    <property type="evidence" value="ECO:0007669"/>
    <property type="project" value="UniProtKB-UniRule"/>
</dbReference>
<dbReference type="CDD" id="cd00610">
    <property type="entry name" value="OAT_like"/>
    <property type="match status" value="1"/>
</dbReference>
<dbReference type="FunFam" id="3.40.640.10:FF:000021">
    <property type="entry name" value="Glutamate-1-semialdehyde 2,1-aminomutase"/>
    <property type="match status" value="1"/>
</dbReference>
<dbReference type="FunFam" id="3.90.1150.10:FF:000012">
    <property type="entry name" value="Glutamate-1-semialdehyde 2,1-aminomutase"/>
    <property type="match status" value="1"/>
</dbReference>
<dbReference type="Gene3D" id="3.90.1150.10">
    <property type="entry name" value="Aspartate Aminotransferase, domain 1"/>
    <property type="match status" value="1"/>
</dbReference>
<dbReference type="Gene3D" id="3.40.640.10">
    <property type="entry name" value="Type I PLP-dependent aspartate aminotransferase-like (Major domain)"/>
    <property type="match status" value="1"/>
</dbReference>
<dbReference type="HAMAP" id="MF_00375">
    <property type="entry name" value="HemL_aminotrans_3"/>
    <property type="match status" value="1"/>
</dbReference>
<dbReference type="InterPro" id="IPR004639">
    <property type="entry name" value="4pyrrol_synth_GluAld_NH2Trfase"/>
</dbReference>
<dbReference type="InterPro" id="IPR005814">
    <property type="entry name" value="Aminotrans_3"/>
</dbReference>
<dbReference type="InterPro" id="IPR049704">
    <property type="entry name" value="Aminotrans_3_PPA_site"/>
</dbReference>
<dbReference type="InterPro" id="IPR015424">
    <property type="entry name" value="PyrdxlP-dep_Trfase"/>
</dbReference>
<dbReference type="InterPro" id="IPR015421">
    <property type="entry name" value="PyrdxlP-dep_Trfase_major"/>
</dbReference>
<dbReference type="InterPro" id="IPR015422">
    <property type="entry name" value="PyrdxlP-dep_Trfase_small"/>
</dbReference>
<dbReference type="NCBIfam" id="TIGR00713">
    <property type="entry name" value="hemL"/>
    <property type="match status" value="1"/>
</dbReference>
<dbReference type="NCBIfam" id="NF000818">
    <property type="entry name" value="PRK00062.1"/>
    <property type="match status" value="1"/>
</dbReference>
<dbReference type="PANTHER" id="PTHR43713">
    <property type="entry name" value="GLUTAMATE-1-SEMIALDEHYDE 2,1-AMINOMUTASE"/>
    <property type="match status" value="1"/>
</dbReference>
<dbReference type="PANTHER" id="PTHR43713:SF3">
    <property type="entry name" value="GLUTAMATE-1-SEMIALDEHYDE 2,1-AMINOMUTASE 1, CHLOROPLASTIC-RELATED"/>
    <property type="match status" value="1"/>
</dbReference>
<dbReference type="Pfam" id="PF00202">
    <property type="entry name" value="Aminotran_3"/>
    <property type="match status" value="1"/>
</dbReference>
<dbReference type="SUPFAM" id="SSF53383">
    <property type="entry name" value="PLP-dependent transferases"/>
    <property type="match status" value="1"/>
</dbReference>
<dbReference type="PROSITE" id="PS00600">
    <property type="entry name" value="AA_TRANSFER_CLASS_3"/>
    <property type="match status" value="1"/>
</dbReference>
<gene>
    <name evidence="1" type="primary">hemL</name>
    <name type="ordered locus">SARI_02802</name>
</gene>
<organism>
    <name type="scientific">Salmonella arizonae (strain ATCC BAA-731 / CDC346-86 / RSK2980)</name>
    <dbReference type="NCBI Taxonomy" id="41514"/>
    <lineage>
        <taxon>Bacteria</taxon>
        <taxon>Pseudomonadati</taxon>
        <taxon>Pseudomonadota</taxon>
        <taxon>Gammaproteobacteria</taxon>
        <taxon>Enterobacterales</taxon>
        <taxon>Enterobacteriaceae</taxon>
        <taxon>Salmonella</taxon>
    </lineage>
</organism>
<reference key="1">
    <citation type="submission" date="2007-11" db="EMBL/GenBank/DDBJ databases">
        <authorList>
            <consortium name="The Salmonella enterica serovar Arizonae Genome Sequencing Project"/>
            <person name="McClelland M."/>
            <person name="Sanderson E.K."/>
            <person name="Porwollik S."/>
            <person name="Spieth J."/>
            <person name="Clifton W.S."/>
            <person name="Fulton R."/>
            <person name="Chunyan W."/>
            <person name="Wollam A."/>
            <person name="Shah N."/>
            <person name="Pepin K."/>
            <person name="Bhonagiri V."/>
            <person name="Nash W."/>
            <person name="Johnson M."/>
            <person name="Thiruvilangam P."/>
            <person name="Wilson R."/>
        </authorList>
    </citation>
    <scope>NUCLEOTIDE SEQUENCE [LARGE SCALE GENOMIC DNA]</scope>
    <source>
        <strain>ATCC BAA-731 / CDC346-86 / RSK2980</strain>
    </source>
</reference>
<proteinExistence type="inferred from homology"/>